<protein>
    <recommendedName>
        <fullName>mRNA-capping enzyme catalytic subunit</fullName>
    </recommendedName>
    <alternativeName>
        <fullName>Virus termination factor large subunit</fullName>
        <shortName>VTF large subunit</shortName>
    </alternativeName>
    <alternativeName>
        <fullName>mRNA-capping enzyme 97 kDa subunit</fullName>
    </alternativeName>
    <alternativeName>
        <fullName>mRNA-capping enzyme D1 subunit</fullName>
    </alternativeName>
    <alternativeName>
        <fullName>mRNA-capping enzyme large subunit</fullName>
    </alternativeName>
    <domain>
        <recommendedName>
            <fullName>Polynucleotide 5'-triphosphatase</fullName>
            <ecNumber>3.6.1.74</ecNumber>
        </recommendedName>
        <alternativeName>
            <fullName>mRNA 5'-triphosphatase</fullName>
            <shortName>TPase</shortName>
        </alternativeName>
    </domain>
    <domain>
        <recommendedName>
            <fullName>mRNA guanylyltransferase</fullName>
            <ecNumber>2.7.7.50</ecNumber>
        </recommendedName>
        <alternativeName>
            <fullName>GTP--RNA guanylyltransferase</fullName>
            <shortName>GTase</shortName>
        </alternativeName>
    </domain>
    <domain>
        <recommendedName>
            <fullName>mRNA (guanine-N(7))-methyltransferase</fullName>
            <ecNumber>2.1.1.56</ecNumber>
        </recommendedName>
        <alternativeName>
            <fullName>mRNA cap methyltransferase</fullName>
        </alternativeName>
    </domain>
</protein>
<sequence>MDANVVSSSTIATYIDALAKNASELEQRSTAYEINNELELVFIKPPLITLTNVVNISTIQESFIRFTVTNKEGVKIRTKIPLSKVHGLDVKNVQLVDAIDNIVWEKKSLVTENRLHKECLLRLSTEERHIFLDYKKYGSSIRLELVNLIQAKTKNFTIDFKLKYFLGSGAQSKSSLLHAINHPKSRPNTSLEIEFTPRDNEKVPYDELIKELTTLSRHIFMASPENVILSPPINAPIKTFMLPKQDIVGLDLENLYAVTKTDGIPITIRVTSNGLYCYFTHLGYIIRYPVKRIIDSEVVVFGEAVKDKNWTVYLIKLIEPVNAINDRLEESKYVESKLVDICDRIVFKSKKYEGPFTTTSEVVDMLSTYLPKQPEGVILFYSKGPKSNIDFKIKKENTIDQTANVVFRYMSSEPIIFGESSIFVEYKKFSNDKGFPKEYGSGKIVLYNGVNYLNNIYCLEYINTHNEVGIKSVVVPIKFIAEFLVNGEILKPRIDKTMKYINSEDYYGNQHNIIVEHLRDQSIKIGDIFNEDKLSDVGHQYANNDKFRLNPEVSYFTNKRTRGPLGILSNYVKTLLISMYCSKTFLDDSNKRKVLAIDFGNGADLEKYFYGEIALLVATDPDADAIARGNERYNKLNSGIKTKYYKFDYIQETIRSDTFVSSVREVFYFGKFNIIDWQFAIHYSFHPRHYATVMNNLSELTASGGKVLITTMDGDKLSKLTDKKTFIIHKNLPSSENYMSVEKIADDRIVVYNPSTMSTPMTEYIIKKNDIVRVFNEYGFVLVDNVDFATIIERSKKFINGASTMEDRPSTKNFFELNRGAIKCEGLDVEDLLSYYVVYVFSKR</sequence>
<organismHost>
    <name type="scientific">Homo sapiens</name>
    <name type="common">Human</name>
    <dbReference type="NCBI Taxonomy" id="9606"/>
</organismHost>
<evidence type="ECO:0000250" key="1"/>
<evidence type="ECO:0000250" key="2">
    <source>
        <dbReference type="UniProtKB" id="P04298"/>
    </source>
</evidence>
<evidence type="ECO:0000255" key="3">
    <source>
        <dbReference type="PROSITE-ProRule" id="PRU00895"/>
    </source>
</evidence>
<evidence type="ECO:0000305" key="4"/>
<keyword id="KW-0002">3D-structure</keyword>
<keyword id="KW-0342">GTP-binding</keyword>
<keyword id="KW-0378">Hydrolase</keyword>
<keyword id="KW-0460">Magnesium</keyword>
<keyword id="KW-0479">Metal-binding</keyword>
<keyword id="KW-0489">Methyltransferase</keyword>
<keyword id="KW-0506">mRNA capping</keyword>
<keyword id="KW-0507">mRNA processing</keyword>
<keyword id="KW-0511">Multifunctional enzyme</keyword>
<keyword id="KW-0547">Nucleotide-binding</keyword>
<keyword id="KW-0548">Nucleotidyltransferase</keyword>
<keyword id="KW-1185">Reference proteome</keyword>
<keyword id="KW-0694">RNA-binding</keyword>
<keyword id="KW-0949">S-adenosyl-L-methionine</keyword>
<keyword id="KW-0808">Transferase</keyword>
<keyword id="KW-0946">Virion</keyword>
<accession>P20979</accession>
<feature type="chain" id="PRO_0000210122" description="mRNA-capping enzyme catalytic subunit">
    <location>
        <begin position="1"/>
        <end position="844"/>
    </location>
</feature>
<feature type="domain" description="mRNA cap 0 methyltransferase" evidence="3">
    <location>
        <begin position="516"/>
        <end position="844"/>
    </location>
</feature>
<feature type="region of interest" description="Triphosphatase-guanylyltransferase" evidence="2">
    <location>
        <begin position="1"/>
        <end position="539"/>
    </location>
</feature>
<feature type="active site" description="N6-GMP-lysine intermediate" evidence="1">
    <location>
        <position position="260"/>
    </location>
</feature>
<feature type="binding site" evidence="2">
    <location>
        <position position="37"/>
    </location>
    <ligand>
        <name>Mg(2+)</name>
        <dbReference type="ChEBI" id="CHEBI:18420"/>
        <note>catalytic; for RNA triphosphatase activity</note>
    </ligand>
</feature>
<feature type="binding site" evidence="2">
    <location>
        <position position="39"/>
    </location>
    <ligand>
        <name>Mg(2+)</name>
        <dbReference type="ChEBI" id="CHEBI:18420"/>
        <note>catalytic; for RNA triphosphatase activity</note>
    </ligand>
</feature>
<feature type="binding site" evidence="2">
    <location>
        <position position="192"/>
    </location>
    <ligand>
        <name>Mg(2+)</name>
        <dbReference type="ChEBI" id="CHEBI:18420"/>
        <note>catalytic; for RNA triphosphatase activity</note>
    </ligand>
</feature>
<feature type="binding site" evidence="2">
    <location>
        <position position="194"/>
    </location>
    <ligand>
        <name>Mg(2+)</name>
        <dbReference type="ChEBI" id="CHEBI:18420"/>
        <note>catalytic; for RNA triphosphatase activity</note>
    </ligand>
</feature>
<feature type="binding site" evidence="3">
    <location>
        <begin position="549"/>
        <end position="550"/>
    </location>
    <ligand>
        <name>S-adenosyl-L-methionine</name>
        <dbReference type="ChEBI" id="CHEBI:59789"/>
    </ligand>
</feature>
<feature type="binding site" evidence="3">
    <location>
        <begin position="569"/>
        <end position="570"/>
    </location>
    <ligand>
        <name>mRNA</name>
        <dbReference type="ChEBI" id="CHEBI:33699"/>
    </ligand>
    <ligandPart>
        <name>mRNA cap</name>
    </ligandPart>
</feature>
<feature type="binding site" evidence="3">
    <location>
        <position position="573"/>
    </location>
    <ligand>
        <name>S-adenosyl-L-methionine</name>
        <dbReference type="ChEBI" id="CHEBI:59789"/>
    </ligand>
</feature>
<feature type="binding site" evidence="3">
    <location>
        <position position="598"/>
    </location>
    <ligand>
        <name>S-adenosyl-L-methionine</name>
        <dbReference type="ChEBI" id="CHEBI:59789"/>
    </ligand>
</feature>
<feature type="binding site" evidence="3">
    <location>
        <position position="620"/>
    </location>
    <ligand>
        <name>S-adenosyl-L-methionine</name>
        <dbReference type="ChEBI" id="CHEBI:59789"/>
    </ligand>
</feature>
<feature type="binding site" evidence="3">
    <location>
        <begin position="678"/>
        <end position="680"/>
    </location>
    <ligand>
        <name>S-adenosyl-L-methionine</name>
        <dbReference type="ChEBI" id="CHEBI:59789"/>
    </ligand>
</feature>
<feature type="site" description="Essential for RNA triphosphatase activity" evidence="2">
    <location>
        <position position="77"/>
    </location>
</feature>
<feature type="site" description="Essential for RNA triphosphatase activity" evidence="2">
    <location>
        <position position="107"/>
    </location>
</feature>
<feature type="site" description="Essential for RNA triphosphatase activity" evidence="2">
    <location>
        <position position="126"/>
    </location>
</feature>
<feature type="site" description="Essential for RNA triphosphatase activity" evidence="2">
    <location>
        <position position="159"/>
    </location>
</feature>
<feature type="site" description="Essential for RNA triphosphatase activity" evidence="2">
    <location>
        <position position="161"/>
    </location>
</feature>
<feature type="site" description="mRNA cap binding" evidence="3">
    <location>
        <position position="607"/>
    </location>
</feature>
<feature type="site" description="mRNA cap binding" evidence="3">
    <location>
        <position position="632"/>
    </location>
</feature>
<feature type="site" description="mRNA cap binding" evidence="3">
    <location>
        <position position="682"/>
    </location>
</feature>
<feature type="site" description="mRNA cap binding" evidence="3">
    <location>
        <position position="763"/>
    </location>
</feature>
<feature type="site" description="mRNA cap binding" evidence="3">
    <location>
        <position position="836"/>
    </location>
</feature>
<dbReference type="EC" id="3.6.1.74"/>
<dbReference type="EC" id="2.7.7.50"/>
<dbReference type="EC" id="2.1.1.56"/>
<dbReference type="EMBL" id="M35027">
    <property type="protein sequence ID" value="AAA48095.1"/>
    <property type="molecule type" value="Genomic_DNA"/>
</dbReference>
<dbReference type="PIR" id="I42514">
    <property type="entry name" value="QQVZVC"/>
</dbReference>
<dbReference type="PDB" id="8P0J">
    <property type="method" value="EM"/>
    <property type="resolution" value="2.39 A"/>
    <property type="chains" value="O=1-844"/>
</dbReference>
<dbReference type="PDB" id="8P0K">
    <property type="method" value="EM"/>
    <property type="resolution" value="2.64 A"/>
    <property type="chains" value="O=1-844"/>
</dbReference>
<dbReference type="PDB" id="8P0N">
    <property type="method" value="EM"/>
    <property type="resolution" value="2.58 A"/>
    <property type="chains" value="O=1-844"/>
</dbReference>
<dbReference type="PDB" id="8RQK">
    <property type="method" value="EM"/>
    <property type="resolution" value="2.65 A"/>
    <property type="chains" value="O=1-844"/>
</dbReference>
<dbReference type="PDBsum" id="8P0J"/>
<dbReference type="PDBsum" id="8P0K"/>
<dbReference type="PDBsum" id="8P0N"/>
<dbReference type="PDBsum" id="8RQK"/>
<dbReference type="EMDB" id="EMD-17334"/>
<dbReference type="EMDB" id="EMD-17335"/>
<dbReference type="EMDB" id="EMD-17336"/>
<dbReference type="EMDB" id="EMD-19442"/>
<dbReference type="SMR" id="P20979"/>
<dbReference type="Proteomes" id="UP000008269">
    <property type="component" value="Segment"/>
</dbReference>
<dbReference type="GO" id="GO:0044423">
    <property type="term" value="C:virion component"/>
    <property type="evidence" value="ECO:0007669"/>
    <property type="project" value="UniProtKB-KW"/>
</dbReference>
<dbReference type="GO" id="GO:0005525">
    <property type="term" value="F:GTP binding"/>
    <property type="evidence" value="ECO:0007669"/>
    <property type="project" value="UniProtKB-KW"/>
</dbReference>
<dbReference type="GO" id="GO:0050355">
    <property type="term" value="F:inorganic triphosphate phosphatase activity"/>
    <property type="evidence" value="ECO:0007669"/>
    <property type="project" value="InterPro"/>
</dbReference>
<dbReference type="GO" id="GO:0046872">
    <property type="term" value="F:metal ion binding"/>
    <property type="evidence" value="ECO:0007669"/>
    <property type="project" value="UniProtKB-KW"/>
</dbReference>
<dbReference type="GO" id="GO:0004482">
    <property type="term" value="F:mRNA 5'-cap (guanine-N7-)-methyltransferase activity"/>
    <property type="evidence" value="ECO:0007669"/>
    <property type="project" value="UniProtKB-EC"/>
</dbReference>
<dbReference type="GO" id="GO:0140818">
    <property type="term" value="F:mRNA 5'-triphosphate monophosphatase activity"/>
    <property type="evidence" value="ECO:0007669"/>
    <property type="project" value="RHEA"/>
</dbReference>
<dbReference type="GO" id="GO:0004484">
    <property type="term" value="F:mRNA guanylyltransferase activity"/>
    <property type="evidence" value="ECO:0007669"/>
    <property type="project" value="UniProtKB-EC"/>
</dbReference>
<dbReference type="GO" id="GO:0004651">
    <property type="term" value="F:polynucleotide 5'-phosphatase activity"/>
    <property type="evidence" value="ECO:0007669"/>
    <property type="project" value="UniProtKB-EC"/>
</dbReference>
<dbReference type="GO" id="GO:0003723">
    <property type="term" value="F:RNA binding"/>
    <property type="evidence" value="ECO:0007669"/>
    <property type="project" value="UniProtKB-KW"/>
</dbReference>
<dbReference type="FunFam" id="3.30.470.140:FF:000001">
    <property type="entry name" value="mRNA-capping enzyme catalytic subunit"/>
    <property type="match status" value="1"/>
</dbReference>
<dbReference type="FunFam" id="3.40.50.150:FF:000307">
    <property type="entry name" value="mRNA-capping enzyme catalytic subunit"/>
    <property type="match status" value="1"/>
</dbReference>
<dbReference type="Gene3D" id="2.40.50.830">
    <property type="match status" value="1"/>
</dbReference>
<dbReference type="Gene3D" id="3.20.100.20">
    <property type="match status" value="1"/>
</dbReference>
<dbReference type="Gene3D" id="3.30.470.140">
    <property type="match status" value="1"/>
</dbReference>
<dbReference type="Gene3D" id="3.40.50.150">
    <property type="entry name" value="Vaccinia Virus protein VP39"/>
    <property type="match status" value="1"/>
</dbReference>
<dbReference type="InterPro" id="IPR048425">
    <property type="entry name" value="MCEL_GT_NTPase"/>
</dbReference>
<dbReference type="InterPro" id="IPR048426">
    <property type="entry name" value="MCEL_GT_OB"/>
</dbReference>
<dbReference type="InterPro" id="IPR046429">
    <property type="entry name" value="MCEL_NTPase_sf"/>
</dbReference>
<dbReference type="InterPro" id="IPR046428">
    <property type="entry name" value="MCEL_OB_dom_sf"/>
</dbReference>
<dbReference type="InterPro" id="IPR019602">
    <property type="entry name" value="MCEL_TPase"/>
</dbReference>
<dbReference type="InterPro" id="IPR046430">
    <property type="entry name" value="MCEL_TPase_sf"/>
</dbReference>
<dbReference type="InterPro" id="IPR004971">
    <property type="entry name" value="mRNA_G-N7_MeTrfase_dom"/>
</dbReference>
<dbReference type="InterPro" id="IPR039753">
    <property type="entry name" value="RG7MT1"/>
</dbReference>
<dbReference type="InterPro" id="IPR029063">
    <property type="entry name" value="SAM-dependent_MTases_sf"/>
</dbReference>
<dbReference type="PANTHER" id="PTHR12189:SF2">
    <property type="entry name" value="MRNA CAP GUANINE-N7 METHYLTRANSFERASE"/>
    <property type="match status" value="1"/>
</dbReference>
<dbReference type="PANTHER" id="PTHR12189">
    <property type="entry name" value="MRNA GUANINE-7- METHYLTRANSFERASE"/>
    <property type="match status" value="1"/>
</dbReference>
<dbReference type="Pfam" id="PF21004">
    <property type="entry name" value="MCEL_GT_NTPase"/>
    <property type="match status" value="1"/>
</dbReference>
<dbReference type="Pfam" id="PF21005">
    <property type="entry name" value="MCEL_GT_OB"/>
    <property type="match status" value="1"/>
</dbReference>
<dbReference type="Pfam" id="PF10640">
    <property type="entry name" value="MCEL_TPase"/>
    <property type="match status" value="1"/>
</dbReference>
<dbReference type="Pfam" id="PF03291">
    <property type="entry name" value="mRNA_G-N7_MeTrfase"/>
    <property type="match status" value="1"/>
</dbReference>
<dbReference type="SUPFAM" id="SSF53335">
    <property type="entry name" value="S-adenosyl-L-methionine-dependent methyltransferases"/>
    <property type="match status" value="1"/>
</dbReference>
<dbReference type="PROSITE" id="PS51562">
    <property type="entry name" value="RNA_CAP0_MT"/>
    <property type="match status" value="1"/>
</dbReference>
<comment type="function">
    <text evidence="2">Catalytic subunit of the mRNA capping enzyme which catalyzes three enzymatic reactions: the 5' triphosphate end of the pre-mRNA is hydrolyzed to a diphosphate by RNA 5' triphosphatase; the diphosphate RNA end is capped with GMP by RNA guanylyltransferase and the GpppN cap is methylated by RNA (guanine-N7) methyltransferase. Heterodimeric mRNA capping enzyme catalyzes the linkage of a N7-methyl-guanosine moiety to the first transcribed nucleotide (cap 0 structure), whereas the methyltransferase OPG102 is responsible for a second methylation at the 2'-O position of the ribose (cap 1 structure). Also involved in early viral gene transcription termination and intermediate viral gene transcription initiation. Early gene transcription termination requires the termination factor VTF, the DNA-dependent ATPase NPH-I/OPG123 and the RAP94/OPG109 subunit of the viral RNA polymerase, as well as the presence of a specific termination motif. Binds, together with RAP94/OPG109, to the termination motif 5'-UUUUUNU-3' in the nascent early mRNA.</text>
</comment>
<comment type="catalytic activity">
    <reaction evidence="2">
        <text>a 5'-end triphospho-ribonucleoside in mRNA + H2O = a 5'-end diphospho-ribonucleoside in mRNA + phosphate + H(+)</text>
        <dbReference type="Rhea" id="RHEA:67004"/>
        <dbReference type="Rhea" id="RHEA-COMP:17164"/>
        <dbReference type="Rhea" id="RHEA-COMP:17165"/>
        <dbReference type="ChEBI" id="CHEBI:15377"/>
        <dbReference type="ChEBI" id="CHEBI:15378"/>
        <dbReference type="ChEBI" id="CHEBI:43474"/>
        <dbReference type="ChEBI" id="CHEBI:167616"/>
        <dbReference type="ChEBI" id="CHEBI:167618"/>
        <dbReference type="EC" id="3.6.1.74"/>
    </reaction>
    <physiologicalReaction direction="left-to-right" evidence="2">
        <dbReference type="Rhea" id="RHEA:67005"/>
    </physiologicalReaction>
</comment>
<comment type="catalytic activity">
    <reaction evidence="2">
        <text>a 5'-end diphospho-ribonucleoside in mRNA + GTP + H(+) = a 5'-end (5'-triphosphoguanosine)-ribonucleoside in mRNA + diphosphate</text>
        <dbReference type="Rhea" id="RHEA:67012"/>
        <dbReference type="Rhea" id="RHEA-COMP:17165"/>
        <dbReference type="Rhea" id="RHEA-COMP:17166"/>
        <dbReference type="ChEBI" id="CHEBI:15378"/>
        <dbReference type="ChEBI" id="CHEBI:33019"/>
        <dbReference type="ChEBI" id="CHEBI:37565"/>
        <dbReference type="ChEBI" id="CHEBI:167616"/>
        <dbReference type="ChEBI" id="CHEBI:167617"/>
        <dbReference type="EC" id="2.7.7.50"/>
    </reaction>
</comment>
<comment type="catalytic activity">
    <reaction evidence="2">
        <text>a 5'-end (5'-triphosphoguanosine)-ribonucleoside in mRNA + S-adenosyl-L-methionine = a 5'-end (N(7)-methyl 5'-triphosphoguanosine)-ribonucleoside in mRNA + S-adenosyl-L-homocysteine</text>
        <dbReference type="Rhea" id="RHEA:67008"/>
        <dbReference type="Rhea" id="RHEA-COMP:17166"/>
        <dbReference type="Rhea" id="RHEA-COMP:17167"/>
        <dbReference type="ChEBI" id="CHEBI:57856"/>
        <dbReference type="ChEBI" id="CHEBI:59789"/>
        <dbReference type="ChEBI" id="CHEBI:156461"/>
        <dbReference type="ChEBI" id="CHEBI:167617"/>
        <dbReference type="EC" id="2.1.1.56"/>
    </reaction>
</comment>
<comment type="cofactor">
    <cofactor evidence="2">
        <name>Mg(2+)</name>
        <dbReference type="ChEBI" id="CHEBI:18420"/>
    </cofactor>
</comment>
<comment type="subunit">
    <text evidence="2">Forms a heterodimer with the regulatory subunit OPG124.</text>
</comment>
<comment type="subcellular location">
    <subcellularLocation>
        <location evidence="2">Virion</location>
    </subcellularLocation>
    <text evidence="2">All the enzymes and other proteins required to synthesize early mRNAs are packaged within the virion core along with the DNA genome.</text>
</comment>
<comment type="domain">
    <text evidence="2">The N-terminus contains the triphosphatase and guanylyltransferase domains, whereas the C-terminus contains the methyltransferase domain. The N-terminus is involved in binding to the termination motif 5'-UUUUUNU-3' in the nascent mRNA.</text>
</comment>
<comment type="similarity">
    <text evidence="4">In the N-terminal section; belongs to the dsDNA virus mRNA guanylyltransferase family.</text>
</comment>
<comment type="similarity">
    <text evidence="3">In the C-terminal section; belongs to the class I-like SAM-binding methyltransferase superfamily. mRNA cap 0 methyltransferase family.</text>
</comment>
<name>MCEL_VACCC</name>
<organism>
    <name type="scientific">Vaccinia virus (strain Copenhagen)</name>
    <name type="common">VACV</name>
    <dbReference type="NCBI Taxonomy" id="10249"/>
    <lineage>
        <taxon>Viruses</taxon>
        <taxon>Varidnaviria</taxon>
        <taxon>Bamfordvirae</taxon>
        <taxon>Nucleocytoviricota</taxon>
        <taxon>Pokkesviricetes</taxon>
        <taxon>Chitovirales</taxon>
        <taxon>Poxviridae</taxon>
        <taxon>Chordopoxvirinae</taxon>
        <taxon>Orthopoxvirus</taxon>
        <taxon>Vaccinia virus</taxon>
    </lineage>
</organism>
<gene>
    <name type="primary">OPG113</name>
    <name type="ORF">D1R</name>
</gene>
<reference key="1">
    <citation type="journal article" date="1990" name="Virology">
        <title>The complete DNA sequence of vaccinia virus.</title>
        <authorList>
            <person name="Goebel S.J."/>
            <person name="Johnson G.P."/>
            <person name="Perkus M.E."/>
            <person name="Davis S.W."/>
            <person name="Winslow J.P."/>
            <person name="Paoletti E."/>
        </authorList>
    </citation>
    <scope>NUCLEOTIDE SEQUENCE [LARGE SCALE GENOMIC DNA]</scope>
</reference>
<reference key="2">
    <citation type="journal article" date="1990" name="Virology">
        <title>Appendix to 'The complete DNA sequence of vaccinia virus'.</title>
        <authorList>
            <person name="Goebel S.J."/>
            <person name="Johnson G.P."/>
            <person name="Perkus M.E."/>
            <person name="Davis S.W."/>
            <person name="Winslow J.P."/>
            <person name="Paoletti E."/>
        </authorList>
    </citation>
    <scope>NUCLEOTIDE SEQUENCE [LARGE SCALE GENOMIC DNA]</scope>
</reference>
<proteinExistence type="evidence at protein level"/>